<dbReference type="EC" id="3.1.3.37"/>
<dbReference type="EMBL" id="L76556">
    <property type="protein sequence ID" value="AAB81104.1"/>
    <property type="molecule type" value="mRNA"/>
</dbReference>
<dbReference type="PIR" id="T09086">
    <property type="entry name" value="T09086"/>
</dbReference>
<dbReference type="RefSeq" id="NP_001413438.1">
    <property type="nucleotide sequence ID" value="NM_001426509.1"/>
</dbReference>
<dbReference type="SMR" id="O20252"/>
<dbReference type="IntAct" id="O20252">
    <property type="interactions" value="1"/>
</dbReference>
<dbReference type="GeneID" id="110805656"/>
<dbReference type="OrthoDB" id="10256725at2759"/>
<dbReference type="SABIO-RK" id="O20252"/>
<dbReference type="UniPathway" id="UPA00116"/>
<dbReference type="Proteomes" id="UP001155700">
    <property type="component" value="Unplaced"/>
</dbReference>
<dbReference type="GO" id="GO:0009507">
    <property type="term" value="C:chloroplast"/>
    <property type="evidence" value="ECO:0007669"/>
    <property type="project" value="UniProtKB-SubCell"/>
</dbReference>
<dbReference type="GO" id="GO:0005737">
    <property type="term" value="C:cytoplasm"/>
    <property type="evidence" value="ECO:0000318"/>
    <property type="project" value="GO_Central"/>
</dbReference>
<dbReference type="GO" id="GO:0042132">
    <property type="term" value="F:fructose 1,6-bisphosphate 1-phosphatase activity"/>
    <property type="evidence" value="ECO:0000318"/>
    <property type="project" value="GO_Central"/>
</dbReference>
<dbReference type="GO" id="GO:0046872">
    <property type="term" value="F:metal ion binding"/>
    <property type="evidence" value="ECO:0007669"/>
    <property type="project" value="UniProtKB-KW"/>
</dbReference>
<dbReference type="GO" id="GO:0050278">
    <property type="term" value="F:sedoheptulose-bisphosphatase activity"/>
    <property type="evidence" value="ECO:0007669"/>
    <property type="project" value="UniProtKB-EC"/>
</dbReference>
<dbReference type="GO" id="GO:0030388">
    <property type="term" value="P:fructose 1,6-bisphosphate metabolic process"/>
    <property type="evidence" value="ECO:0000318"/>
    <property type="project" value="GO_Central"/>
</dbReference>
<dbReference type="GO" id="GO:0006002">
    <property type="term" value="P:fructose 6-phosphate metabolic process"/>
    <property type="evidence" value="ECO:0000318"/>
    <property type="project" value="GO_Central"/>
</dbReference>
<dbReference type="GO" id="GO:0006000">
    <property type="term" value="P:fructose metabolic process"/>
    <property type="evidence" value="ECO:0000318"/>
    <property type="project" value="GO_Central"/>
</dbReference>
<dbReference type="GO" id="GO:0006094">
    <property type="term" value="P:gluconeogenesis"/>
    <property type="evidence" value="ECO:0000318"/>
    <property type="project" value="GO_Central"/>
</dbReference>
<dbReference type="GO" id="GO:0019253">
    <property type="term" value="P:reductive pentose-phosphate cycle"/>
    <property type="evidence" value="ECO:0007669"/>
    <property type="project" value="UniProtKB-UniPathway"/>
</dbReference>
<dbReference type="GO" id="GO:0005986">
    <property type="term" value="P:sucrose biosynthetic process"/>
    <property type="evidence" value="ECO:0007669"/>
    <property type="project" value="TreeGrafter"/>
</dbReference>
<dbReference type="CDD" id="cd00354">
    <property type="entry name" value="FBPase"/>
    <property type="match status" value="1"/>
</dbReference>
<dbReference type="FunFam" id="3.30.540.10:FF:000010">
    <property type="entry name" value="Sedoheptulose-1,7-bisphosphatase, chloroplastic"/>
    <property type="match status" value="1"/>
</dbReference>
<dbReference type="FunFam" id="3.40.190.80:FF:000008">
    <property type="entry name" value="Sedoheptulose-1,7-bisphosphatase, chloroplastic"/>
    <property type="match status" value="1"/>
</dbReference>
<dbReference type="Gene3D" id="3.40.190.80">
    <property type="match status" value="1"/>
</dbReference>
<dbReference type="Gene3D" id="3.30.540.10">
    <property type="entry name" value="Fructose-1,6-Bisphosphatase, subunit A, domain 1"/>
    <property type="match status" value="1"/>
</dbReference>
<dbReference type="HAMAP" id="MF_01855">
    <property type="entry name" value="FBPase_class1"/>
    <property type="match status" value="1"/>
</dbReference>
<dbReference type="InterPro" id="IPR044015">
    <property type="entry name" value="FBPase_C_dom"/>
</dbReference>
<dbReference type="InterPro" id="IPR000146">
    <property type="entry name" value="FBPase_class-1"/>
</dbReference>
<dbReference type="InterPro" id="IPR033391">
    <property type="entry name" value="FBPase_N"/>
</dbReference>
<dbReference type="InterPro" id="IPR020548">
    <property type="entry name" value="Fructose_bisphosphatase_AS"/>
</dbReference>
<dbReference type="InterPro" id="IPR023079">
    <property type="entry name" value="SBPase"/>
</dbReference>
<dbReference type="PANTHER" id="PTHR11556">
    <property type="entry name" value="FRUCTOSE-1,6-BISPHOSPHATASE-RELATED"/>
    <property type="match status" value="1"/>
</dbReference>
<dbReference type="PANTHER" id="PTHR11556:SF35">
    <property type="entry name" value="SEDOHEPTULOSE-1,7-BISPHOSPHATASE, CHLOROPLASTIC"/>
    <property type="match status" value="1"/>
</dbReference>
<dbReference type="Pfam" id="PF00316">
    <property type="entry name" value="FBPase"/>
    <property type="match status" value="1"/>
</dbReference>
<dbReference type="Pfam" id="PF18913">
    <property type="entry name" value="FBPase_C"/>
    <property type="match status" value="1"/>
</dbReference>
<dbReference type="PRINTS" id="PR01958">
    <property type="entry name" value="S17BPHPHTASE"/>
</dbReference>
<dbReference type="SUPFAM" id="SSF56655">
    <property type="entry name" value="Carbohydrate phosphatase"/>
    <property type="match status" value="1"/>
</dbReference>
<dbReference type="PROSITE" id="PS00124">
    <property type="entry name" value="FBPASE"/>
    <property type="match status" value="1"/>
</dbReference>
<name>S17P_SPIOL</name>
<reference key="1">
    <citation type="journal article" date="1996" name="Plant Mol. Biol.">
        <title>Higher-plant chloroplast and cytosolic fructose-1,6-bisphosphatase isoenzymes: origins via duplication rather than prokaryote-eukaryote divergence.</title>
        <authorList>
            <person name="Martin W."/>
            <person name="Mustafa A.Z."/>
            <person name="Henze K."/>
            <person name="Schnarrenberger C."/>
        </authorList>
    </citation>
    <scope>NUCLEOTIDE SEQUENCE [MRNA]</scope>
    <source>
        <tissue>Seedling</tissue>
    </source>
</reference>
<proteinExistence type="evidence at transcript level"/>
<protein>
    <recommendedName>
        <fullName>Sedoheptulose-1,7-bisphosphatase, chloroplastic</fullName>
        <ecNumber>3.1.3.37</ecNumber>
    </recommendedName>
    <alternativeName>
        <fullName>SED(1,7)P2ase</fullName>
    </alternativeName>
    <alternativeName>
        <fullName>Sedoheptulose bisphosphatase</fullName>
        <shortName>SBPase</shortName>
    </alternativeName>
</protein>
<keyword id="KW-0113">Calvin cycle</keyword>
<keyword id="KW-0119">Carbohydrate metabolism</keyword>
<keyword id="KW-0150">Chloroplast</keyword>
<keyword id="KW-1015">Disulfide bond</keyword>
<keyword id="KW-0378">Hydrolase</keyword>
<keyword id="KW-0460">Magnesium</keyword>
<keyword id="KW-0479">Metal-binding</keyword>
<keyword id="KW-0934">Plastid</keyword>
<keyword id="KW-1185">Reference proteome</keyword>
<keyword id="KW-0809">Transit peptide</keyword>
<feature type="transit peptide" description="Chloroplast" evidence="2">
    <location>
        <begin position="1"/>
        <end status="unknown"/>
    </location>
</feature>
<feature type="chain" id="PRO_0000008823" description="Sedoheptulose-1,7-bisphosphatase, chloroplastic">
    <location>
        <begin status="unknown"/>
        <end position="387"/>
    </location>
</feature>
<feature type="binding site" evidence="2">
    <location>
        <position position="120"/>
    </location>
    <ligand>
        <name>Mg(2+)</name>
        <dbReference type="ChEBI" id="CHEBI:18420"/>
        <label>1</label>
    </ligand>
</feature>
<feature type="binding site" evidence="2">
    <location>
        <position position="149"/>
    </location>
    <ligand>
        <name>Mg(2+)</name>
        <dbReference type="ChEBI" id="CHEBI:18420"/>
        <label>1</label>
    </ligand>
</feature>
<feature type="binding site" evidence="2">
    <location>
        <position position="149"/>
    </location>
    <ligand>
        <name>Mg(2+)</name>
        <dbReference type="ChEBI" id="CHEBI:18420"/>
        <label>2</label>
    </ligand>
</feature>
<feature type="binding site" evidence="2">
    <location>
        <position position="170"/>
    </location>
    <ligand>
        <name>Mg(2+)</name>
        <dbReference type="ChEBI" id="CHEBI:18420"/>
        <label>2</label>
    </ligand>
</feature>
<feature type="binding site" evidence="2">
    <location>
        <position position="170"/>
    </location>
    <ligand>
        <name>Mg(2+)</name>
        <dbReference type="ChEBI" id="CHEBI:18420"/>
        <label>3</label>
    </ligand>
</feature>
<feature type="binding site" evidence="2">
    <location>
        <position position="172"/>
    </location>
    <ligand>
        <name>Mg(2+)</name>
        <dbReference type="ChEBI" id="CHEBI:18420"/>
        <label>2</label>
    </ligand>
</feature>
<feature type="binding site" evidence="1">
    <location>
        <begin position="173"/>
        <end position="176"/>
    </location>
    <ligand>
        <name>substrate</name>
    </ligand>
</feature>
<feature type="binding site" evidence="2">
    <location>
        <position position="173"/>
    </location>
    <ligand>
        <name>Mg(2+)</name>
        <dbReference type="ChEBI" id="CHEBI:18420"/>
        <label>3</label>
    </ligand>
</feature>
<feature type="binding site" evidence="1">
    <location>
        <position position="284"/>
    </location>
    <ligand>
        <name>substrate</name>
    </ligand>
</feature>
<feature type="binding site" evidence="1">
    <location>
        <position position="314"/>
    </location>
    <ligand>
        <name>substrate</name>
    </ligand>
</feature>
<feature type="binding site" evidence="2">
    <location>
        <position position="320"/>
    </location>
    <ligand>
        <name>Mg(2+)</name>
        <dbReference type="ChEBI" id="CHEBI:18420"/>
        <label>3</label>
    </ligand>
</feature>
<feature type="disulfide bond" description="Redox-active (light-modulated)" evidence="2">
    <location>
        <begin position="109"/>
        <end position="114"/>
    </location>
</feature>
<organism>
    <name type="scientific">Spinacia oleracea</name>
    <name type="common">Spinach</name>
    <dbReference type="NCBI Taxonomy" id="3562"/>
    <lineage>
        <taxon>Eukaryota</taxon>
        <taxon>Viridiplantae</taxon>
        <taxon>Streptophyta</taxon>
        <taxon>Embryophyta</taxon>
        <taxon>Tracheophyta</taxon>
        <taxon>Spermatophyta</taxon>
        <taxon>Magnoliopsida</taxon>
        <taxon>eudicotyledons</taxon>
        <taxon>Gunneridae</taxon>
        <taxon>Pentapetalae</taxon>
        <taxon>Caryophyllales</taxon>
        <taxon>Chenopodiaceae</taxon>
        <taxon>Chenopodioideae</taxon>
        <taxon>Anserineae</taxon>
        <taxon>Spinacia</taxon>
    </lineage>
</organism>
<comment type="catalytic activity">
    <reaction>
        <text>D-sedoheptulose 1,7-bisphosphate + H2O = D-sedoheptulose 7-phosphate + phosphate</text>
        <dbReference type="Rhea" id="RHEA:17461"/>
        <dbReference type="ChEBI" id="CHEBI:15377"/>
        <dbReference type="ChEBI" id="CHEBI:43474"/>
        <dbReference type="ChEBI" id="CHEBI:57483"/>
        <dbReference type="ChEBI" id="CHEBI:58335"/>
        <dbReference type="EC" id="3.1.3.37"/>
    </reaction>
</comment>
<comment type="cofactor">
    <cofactor evidence="3">
        <name>Mg(2+)</name>
        <dbReference type="ChEBI" id="CHEBI:18420"/>
    </cofactor>
    <text evidence="3">Binds 3 Mg(2+) ions per subunit.</text>
</comment>
<comment type="pathway">
    <text>Carbohydrate biosynthesis; Calvin cycle.</text>
</comment>
<comment type="subunit">
    <text evidence="1">Homodimer.</text>
</comment>
<comment type="subcellular location">
    <subcellularLocation>
        <location>Plastid</location>
        <location>Chloroplast</location>
    </subcellularLocation>
</comment>
<comment type="similarity">
    <text evidence="3">Belongs to the FBPase class 1 family.</text>
</comment>
<accession>O20252</accession>
<sequence>METSMACCSRSIVLPRVSPQHSSALVPSSINLKSLKSSSLFGESLRMTTKSSVRVNKAKNSSLVTKCELGDSLEEFLAKATTDKGLIRLMMCMGEALRTIGFKVRTASCGGTQCVNTFGDEQLAIDVLADKLLFEALNYSHFCKYACSEELPELQDMGGPVDGGFSVAFDPLDGSSIVDTNFSVGTIFGVWPGDKLTGVTGRDQVAAAMGIYGPRTTYVLALKDYPGTHEFLLLDEGKWQHVKETTEINEGKLFCPGNLRATSDNADYAKLIQYYIKEKYTLRYTGGMVPDVNQIIVKEKGIFTNVISPTAKAKLRLLFEVAPLGFLIEKAGGHSSEGTKSVLDIEVKNLDDRTQVAYGSLNEIIRFEKTLYGSSRLEEPVPVGAAA</sequence>
<evidence type="ECO:0000250" key="1"/>
<evidence type="ECO:0000255" key="2"/>
<evidence type="ECO:0000305" key="3"/>